<organism>
    <name type="scientific">Staphylococcus aureus (strain bovine RF122 / ET3-1)</name>
    <dbReference type="NCBI Taxonomy" id="273036"/>
    <lineage>
        <taxon>Bacteria</taxon>
        <taxon>Bacillati</taxon>
        <taxon>Bacillota</taxon>
        <taxon>Bacilli</taxon>
        <taxon>Bacillales</taxon>
        <taxon>Staphylococcaceae</taxon>
        <taxon>Staphylococcus</taxon>
    </lineage>
</organism>
<sequence>MTIPEKPQGVIWTDAQWQSIYATGQDVLVAAAAGSGKTAVLVERIIQKILRDGIDVDRLLVVTFTNLSAREMKHRVDQRIQEASIADPANAHLKNQRIKIHQAQISTLHSFCLKLIQQHYDVLNIDPNFRTSSEAENILLLEQTIDEVIEQHYDILDPAFIELTEQLSSDRSDDQFRMIIKQLYFFSVANPNPTNWLDQLVTPYEEEAQQAQLIQILTDLSKVFITAAYDALNKAYDLFSMMDGVDKHLAVIEDERRLMGRVLEGGFIDIPYLTGHEFGARLPNITAKIKEANEMMVDALKDAKLQYKKYKSLIDKVKSDYFSREADDLKADMQQLAPRVKYLARIVKDVMSEFNRKKRSKNILDFSDYEHFALQILTNEDGSPSEIAESYRQHFQEILVDEYQDTNRVQEKILSCIKTGDEHNGNLFMVGDVKQSIYKFRQADPSLFIEKYQRFTIDGDGTGRRMDLSQNFRSRKEVLSTTNYIFKHMMDEQVGEVNYDESAQLYYGAPYDESDHPVNLKVLIEADQEHSDLTGSEQEAHFIVEQVKDILEHQKVYDMKTRSYRSATYKDIVILERSFGQARNLQQAFKNEDIPFHVNSREGYFEQTEVRLALSFLRAIDNPLQDIYLVGLMRSVIYQFKEDELAQIRILSPNDDYFYQSIVNYINDEAADAILVDKLKMFLSDIQSYQQYSKDHPVYQLIDKFYNDHYVIQYFSGLIGGRGRRANLYGLFNKAIEFENSSFRGLYQFIRFIDELIERGKDFGEENVVGPNDNVVRMMTIHSSKGLEFPFVIYSGLSKDFNKRDLKQPVILNQQFGLGMDYFDVDKEMAFPSLASVAYRAVAEKELVSEEMRLVYVALTRAKEQLYLIGRVKNDKSLLELEQLSISGEHIAVNERLTSPNPFHLIYSILSKHQSASIPDDLKFEKDIAQVEDSSRPNVNISIIYFEDVSTETILDNDEYRSVNQLETMQNGNEDVKAQIKHQLDYQYPYVNDTKKPSKQSVSELKRQYETEESGTSYERVRQYRIGFSTYERPKFLSEQGKRKANEIGTLMHTVMQHLPFKKERISEVELHQYIDGLIDKHIIEADAKKDIRMDEIMTFINSELYSIIAEAEQVYRELPFVVNQALVDQLPQGDEDVSIIQGMIDLIFVKDGVHYFVDYKTDAFNRRRGMTDEEIGTQLKNKYKIQMKYYQNTLQTILNKEVKGYLYFFKFGTLQL</sequence>
<feature type="chain" id="PRO_0000379307" description="ATP-dependent helicase/nuclease subunit A">
    <location>
        <begin position="1"/>
        <end position="1217"/>
    </location>
</feature>
<feature type="domain" description="UvrD-like helicase ATP-binding" evidence="1">
    <location>
        <begin position="10"/>
        <end position="475"/>
    </location>
</feature>
<feature type="domain" description="UvrD-like helicase C-terminal" evidence="1">
    <location>
        <begin position="491"/>
        <end position="786"/>
    </location>
</feature>
<feature type="binding site" evidence="1">
    <location>
        <begin position="31"/>
        <end position="38"/>
    </location>
    <ligand>
        <name>ATP</name>
        <dbReference type="ChEBI" id="CHEBI:30616"/>
    </ligand>
</feature>
<name>ADDA_STAAB</name>
<comment type="function">
    <text evidence="1">The heterodimer acts as both an ATP-dependent DNA helicase and an ATP-dependent, dual-direction single-stranded exonuclease. Recognizes the chi site generating a DNA molecule suitable for the initiation of homologous recombination. The AddA nuclease domain is required for chi fragment generation; this subunit has the helicase and 3' -&gt; 5' nuclease activities.</text>
</comment>
<comment type="catalytic activity">
    <reaction evidence="1">
        <text>Couples ATP hydrolysis with the unwinding of duplex DNA by translocating in the 3'-5' direction.</text>
        <dbReference type="EC" id="5.6.2.4"/>
    </reaction>
</comment>
<comment type="catalytic activity">
    <reaction evidence="1">
        <text>ATP + H2O = ADP + phosphate + H(+)</text>
        <dbReference type="Rhea" id="RHEA:13065"/>
        <dbReference type="ChEBI" id="CHEBI:15377"/>
        <dbReference type="ChEBI" id="CHEBI:15378"/>
        <dbReference type="ChEBI" id="CHEBI:30616"/>
        <dbReference type="ChEBI" id="CHEBI:43474"/>
        <dbReference type="ChEBI" id="CHEBI:456216"/>
        <dbReference type="EC" id="5.6.2.4"/>
    </reaction>
</comment>
<comment type="cofactor">
    <cofactor evidence="1">
        <name>Mg(2+)</name>
        <dbReference type="ChEBI" id="CHEBI:18420"/>
    </cofactor>
</comment>
<comment type="subunit">
    <text evidence="1">Heterodimer of AddA and AddB/RexB.</text>
</comment>
<comment type="similarity">
    <text evidence="1">Belongs to the helicase family. AddA subfamily.</text>
</comment>
<proteinExistence type="inferred from homology"/>
<dbReference type="EC" id="3.1.-.-" evidence="1"/>
<dbReference type="EC" id="5.6.2.4" evidence="1"/>
<dbReference type="EMBL" id="AJ938182">
    <property type="protein sequence ID" value="CAI80524.1"/>
    <property type="molecule type" value="Genomic_DNA"/>
</dbReference>
<dbReference type="RefSeq" id="WP_000154917.1">
    <property type="nucleotide sequence ID" value="NC_007622.1"/>
</dbReference>
<dbReference type="SMR" id="Q2YWW4"/>
<dbReference type="KEGG" id="sab:SAB0836"/>
<dbReference type="HOGENOM" id="CLU_001114_3_1_9"/>
<dbReference type="GO" id="GO:0005829">
    <property type="term" value="C:cytosol"/>
    <property type="evidence" value="ECO:0007669"/>
    <property type="project" value="TreeGrafter"/>
</dbReference>
<dbReference type="GO" id="GO:0033202">
    <property type="term" value="C:DNA helicase complex"/>
    <property type="evidence" value="ECO:0007669"/>
    <property type="project" value="TreeGrafter"/>
</dbReference>
<dbReference type="GO" id="GO:0043138">
    <property type="term" value="F:3'-5' DNA helicase activity"/>
    <property type="evidence" value="ECO:0007669"/>
    <property type="project" value="UniProtKB-UniRule"/>
</dbReference>
<dbReference type="GO" id="GO:0008408">
    <property type="term" value="F:3'-5' exonuclease activity"/>
    <property type="evidence" value="ECO:0007669"/>
    <property type="project" value="UniProtKB-UniRule"/>
</dbReference>
<dbReference type="GO" id="GO:0005524">
    <property type="term" value="F:ATP binding"/>
    <property type="evidence" value="ECO:0007669"/>
    <property type="project" value="UniProtKB-UniRule"/>
</dbReference>
<dbReference type="GO" id="GO:0016887">
    <property type="term" value="F:ATP hydrolysis activity"/>
    <property type="evidence" value="ECO:0007669"/>
    <property type="project" value="RHEA"/>
</dbReference>
<dbReference type="GO" id="GO:0003690">
    <property type="term" value="F:double-stranded DNA binding"/>
    <property type="evidence" value="ECO:0007669"/>
    <property type="project" value="UniProtKB-UniRule"/>
</dbReference>
<dbReference type="GO" id="GO:0000724">
    <property type="term" value="P:double-strand break repair via homologous recombination"/>
    <property type="evidence" value="ECO:0007669"/>
    <property type="project" value="UniProtKB-UniRule"/>
</dbReference>
<dbReference type="CDD" id="cd17932">
    <property type="entry name" value="DEXQc_UvrD"/>
    <property type="match status" value="2"/>
</dbReference>
<dbReference type="FunFam" id="3.40.50.300:FF:001196">
    <property type="entry name" value="ATP-dependent helicase/nuclease subunit A"/>
    <property type="match status" value="1"/>
</dbReference>
<dbReference type="FunFam" id="3.40.50.300:FF:001715">
    <property type="entry name" value="ATP-dependent helicase/nuclease subunit A"/>
    <property type="match status" value="1"/>
</dbReference>
<dbReference type="Gene3D" id="3.90.320.10">
    <property type="match status" value="1"/>
</dbReference>
<dbReference type="Gene3D" id="3.40.50.300">
    <property type="entry name" value="P-loop containing nucleotide triphosphate hydrolases"/>
    <property type="match status" value="4"/>
</dbReference>
<dbReference type="Gene3D" id="1.10.486.10">
    <property type="entry name" value="PCRA, domain 4"/>
    <property type="match status" value="1"/>
</dbReference>
<dbReference type="HAMAP" id="MF_01451">
    <property type="entry name" value="AddA"/>
    <property type="match status" value="1"/>
</dbReference>
<dbReference type="InterPro" id="IPR014152">
    <property type="entry name" value="AddA"/>
</dbReference>
<dbReference type="InterPro" id="IPR014017">
    <property type="entry name" value="DNA_helicase_UvrD-like_C"/>
</dbReference>
<dbReference type="InterPro" id="IPR000212">
    <property type="entry name" value="DNA_helicase_UvrD/REP"/>
</dbReference>
<dbReference type="InterPro" id="IPR027417">
    <property type="entry name" value="P-loop_NTPase"/>
</dbReference>
<dbReference type="InterPro" id="IPR011604">
    <property type="entry name" value="PDDEXK-like_dom_sf"/>
</dbReference>
<dbReference type="InterPro" id="IPR038726">
    <property type="entry name" value="PDDEXK_AddAB-type"/>
</dbReference>
<dbReference type="InterPro" id="IPR011335">
    <property type="entry name" value="Restrct_endonuc-II-like"/>
</dbReference>
<dbReference type="InterPro" id="IPR014016">
    <property type="entry name" value="UvrD-like_ATP-bd"/>
</dbReference>
<dbReference type="NCBIfam" id="TIGR02785">
    <property type="entry name" value="addA_Gpos"/>
    <property type="match status" value="1"/>
</dbReference>
<dbReference type="PANTHER" id="PTHR11070:SF48">
    <property type="entry name" value="ATP-DEPENDENT HELICASE_NUCLEASE SUBUNIT A"/>
    <property type="match status" value="1"/>
</dbReference>
<dbReference type="PANTHER" id="PTHR11070">
    <property type="entry name" value="UVRD / RECB / PCRA DNA HELICASE FAMILY MEMBER"/>
    <property type="match status" value="1"/>
</dbReference>
<dbReference type="Pfam" id="PF12705">
    <property type="entry name" value="PDDEXK_1"/>
    <property type="match status" value="1"/>
</dbReference>
<dbReference type="Pfam" id="PF00580">
    <property type="entry name" value="UvrD-helicase"/>
    <property type="match status" value="1"/>
</dbReference>
<dbReference type="Pfam" id="PF13361">
    <property type="entry name" value="UvrD_C"/>
    <property type="match status" value="1"/>
</dbReference>
<dbReference type="SUPFAM" id="SSF52540">
    <property type="entry name" value="P-loop containing nucleoside triphosphate hydrolases"/>
    <property type="match status" value="1"/>
</dbReference>
<dbReference type="SUPFAM" id="SSF52980">
    <property type="entry name" value="Restriction endonuclease-like"/>
    <property type="match status" value="1"/>
</dbReference>
<dbReference type="PROSITE" id="PS51198">
    <property type="entry name" value="UVRD_HELICASE_ATP_BIND"/>
    <property type="match status" value="1"/>
</dbReference>
<dbReference type="PROSITE" id="PS51217">
    <property type="entry name" value="UVRD_HELICASE_CTER"/>
    <property type="match status" value="1"/>
</dbReference>
<keyword id="KW-0067">ATP-binding</keyword>
<keyword id="KW-0227">DNA damage</keyword>
<keyword id="KW-0234">DNA repair</keyword>
<keyword id="KW-0238">DNA-binding</keyword>
<keyword id="KW-0269">Exonuclease</keyword>
<keyword id="KW-0347">Helicase</keyword>
<keyword id="KW-0378">Hydrolase</keyword>
<keyword id="KW-0413">Isomerase</keyword>
<keyword id="KW-0540">Nuclease</keyword>
<keyword id="KW-0547">Nucleotide-binding</keyword>
<protein>
    <recommendedName>
        <fullName evidence="1">ATP-dependent helicase/nuclease subunit A</fullName>
        <ecNumber evidence="1">3.1.-.-</ecNumber>
        <ecNumber evidence="1">5.6.2.4</ecNumber>
    </recommendedName>
    <alternativeName>
        <fullName evidence="1">ATP-dependent helicase/nuclease AddA</fullName>
    </alternativeName>
    <alternativeName>
        <fullName evidence="1">DNA 3'-5' helicase AddA</fullName>
    </alternativeName>
</protein>
<evidence type="ECO:0000255" key="1">
    <source>
        <dbReference type="HAMAP-Rule" id="MF_01451"/>
    </source>
</evidence>
<gene>
    <name evidence="1" type="primary">addA</name>
    <name type="ordered locus">SAB0836</name>
</gene>
<accession>Q2YWW4</accession>
<reference key="1">
    <citation type="journal article" date="2007" name="PLoS ONE">
        <title>Molecular correlates of host specialization in Staphylococcus aureus.</title>
        <authorList>
            <person name="Herron-Olson L."/>
            <person name="Fitzgerald J.R."/>
            <person name="Musser J.M."/>
            <person name="Kapur V."/>
        </authorList>
    </citation>
    <scope>NUCLEOTIDE SEQUENCE [LARGE SCALE GENOMIC DNA]</scope>
    <source>
        <strain>bovine RF122 / ET3-1</strain>
    </source>
</reference>